<comment type="function">
    <text>Heterotrimer: Snake venom phospholipase A2 (PLA2) heterotrimer that acts as a potent presynaptic neurotoxin by blocking synaptic transmission and synaptic vesicle recycling. May act by binding in a calcium-dependent fashion to neurotonal pentraxin-1 (NPTX1) and neurotonal pentraxin-2 (NPTX2), but not to neuronal pentraxin receptor (NPTXR). Also binds to taipoxin-associated calcium binding protein 49 (RCN2), a protein localized in the lumen of endoplasmic reticulum.</text>
</comment>
<comment type="function">
    <text evidence="2 3 5 6">Monomer (gamma chain): Snake venom phospholipase A2 homolog that is neither toxic nor enzymatically active. Does not bind calcium (PubMed:22776098).</text>
</comment>
<comment type="subunit">
    <text evidence="6">Heterotrimer of alpha, beta, and gamma chains; non-covalently linked.</text>
</comment>
<comment type="subcellular location">
    <subcellularLocation>
        <location>Secreted</location>
    </subcellularLocation>
</comment>
<comment type="tissue specificity">
    <text>Expressed by the venom gland.</text>
</comment>
<comment type="PTM">
    <text evidence="6">Contains 0.9% fucose, 2.2% mannose, 4.2% N-acetyl-D-glucosamine, 3.5% galactose, and 3.8% N-acetyl-neuraminic acid (sialic acid).</text>
</comment>
<comment type="toxic dose">
    <text evidence="6">Heterotrimer: LD(50) is 2 ug/kg by intravenous injection into mice.</text>
</comment>
<comment type="similarity">
    <text evidence="7">Belongs to the phospholipase A2 family. Group I subfamily. D49 sub-subfamily.</text>
</comment>
<organism>
    <name type="scientific">Oxyuranus scutellatus scutellatus</name>
    <name type="common">Australian taipan</name>
    <name type="synonym">Coastal taipan</name>
    <dbReference type="NCBI Taxonomy" id="8667"/>
    <lineage>
        <taxon>Eukaryota</taxon>
        <taxon>Metazoa</taxon>
        <taxon>Chordata</taxon>
        <taxon>Craniata</taxon>
        <taxon>Vertebrata</taxon>
        <taxon>Euteleostomi</taxon>
        <taxon>Lepidosauria</taxon>
        <taxon>Squamata</taxon>
        <taxon>Bifurcata</taxon>
        <taxon>Unidentata</taxon>
        <taxon>Episquamata</taxon>
        <taxon>Toxicofera</taxon>
        <taxon>Serpentes</taxon>
        <taxon>Colubroidea</taxon>
        <taxon>Elapidae</taxon>
        <taxon>Hydrophiinae</taxon>
        <taxon>Oxyuranus</taxon>
    </lineage>
</organism>
<feature type="signal peptide" evidence="3 4">
    <location>
        <begin position="1"/>
        <end position="19"/>
    </location>
</feature>
<feature type="chain" id="PRO_0000161680" description="Acidic phospholipase A2 homolog taipoxin gamma chain">
    <location>
        <begin position="20"/>
        <end position="152"/>
    </location>
</feature>
<feature type="glycosylation site" description="N-linked (GlcNAc...) asparagine" evidence="4">
    <location>
        <position position="97"/>
    </location>
</feature>
<feature type="disulfide bond" evidence="1">
    <location>
        <begin position="38"/>
        <end position="104"/>
    </location>
</feature>
<feature type="disulfide bond" evidence="7">
    <location>
        <begin position="42"/>
        <end position="46"/>
    </location>
</feature>
<feature type="disulfide bond" evidence="1">
    <location>
        <begin position="54"/>
        <end position="151"/>
    </location>
</feature>
<feature type="disulfide bond" evidence="1">
    <location>
        <begin position="56"/>
        <end position="72"/>
    </location>
</feature>
<feature type="disulfide bond" evidence="1">
    <location>
        <begin position="71"/>
        <end position="132"/>
    </location>
</feature>
<feature type="disulfide bond" evidence="1">
    <location>
        <begin position="78"/>
        <end position="125"/>
    </location>
</feature>
<feature type="disulfide bond" evidence="1">
    <location>
        <begin position="88"/>
        <end position="118"/>
    </location>
</feature>
<feature type="disulfide bond" evidence="1">
    <location>
        <begin position="111"/>
        <end position="123"/>
    </location>
</feature>
<feature type="sequence conflict" description="In Ref. 2; AA sequence." evidence="7" ref="2">
    <original>I</original>
    <variation>L</variation>
    <location>
        <position position="22"/>
    </location>
</feature>
<feature type="sequence conflict" description="In Ref. 2; AA sequence." evidence="7" ref="2">
    <original>L</original>
    <variation>I</variation>
    <location>
        <position position="27"/>
    </location>
</feature>
<feature type="sequence conflict" description="In Ref. 2; AA sequence." evidence="7" ref="2">
    <original>ES</original>
    <variation>SE</variation>
    <location>
        <begin position="44"/>
        <end position="45"/>
    </location>
</feature>
<feature type="sequence conflict" description="In Ref. 2; AA sequence." evidence="7" ref="2">
    <original>LN</original>
    <variation>DL</variation>
    <location>
        <begin position="141"/>
        <end position="142"/>
    </location>
</feature>
<feature type="sequence conflict" description="In Ref. 2; AA sequence." evidence="7" ref="2">
    <original>HC</original>
    <variation>CH</variation>
    <location>
        <begin position="150"/>
        <end position="151"/>
    </location>
</feature>
<proteinExistence type="evidence at protein level"/>
<reference key="1">
    <citation type="submission" date="2004-07" db="EMBL/GenBank/DDBJ databases">
        <authorList>
            <person name="Welton R.E."/>
            <person name="Burnell J.N."/>
        </authorList>
    </citation>
    <scope>NUCLEOTIDE SEQUENCE [MRNA]</scope>
    <source>
        <tissue>Venom gland</tissue>
    </source>
</reference>
<reference key="2">
    <citation type="journal article" date="1977" name="FEBS Lett.">
        <title>Taipoxin, an extremely potent presynaptic snake venom neurotoxin. Elucidation of the primary structure of the acidic carbohydrate-containing taipoxin-subunit, a prophospholipase homolog.</title>
        <authorList>
            <person name="Fohlman J."/>
            <person name="Lind P."/>
            <person name="Eaker D."/>
        </authorList>
    </citation>
    <scope>PROTEIN SEQUENCE OF 20-152</scope>
    <scope>GLYCOSYLATION AT ASN-97</scope>
    <source>
        <tissue>Venom</tissue>
    </source>
</reference>
<reference key="3">
    <citation type="journal article" date="2012" name="FEBS J.">
        <title>Structural analysis of trimeric phospholipase A2 neurotoxin from the Australian taipan snake venom.</title>
        <authorList>
            <person name="Cendron L."/>
            <person name="Micetic I."/>
            <person name="Polverino de Laureto P."/>
            <person name="Paoli M."/>
        </authorList>
    </citation>
    <scope>PROTEIN SEQUENCE OF 20-23</scope>
    <scope>ABSENCE OF ENZYMATIC ACTIVITY OF THE GAMMA CHAIN</scope>
    <source>
        <tissue>Venom</tissue>
    </source>
</reference>
<reference key="4">
    <citation type="journal article" date="1976" name="Eur. J. Biochem.">
        <title>Taipoxin, an extremely potent presynaptic neurotoxin from the venom of the australian snake taipan (Oxyuranus s. scutellatus). Isolation, characterization, quaternary structure and pharmacological properties.</title>
        <authorList>
            <person name="Fohlman J."/>
            <person name="Eaker D."/>
            <person name="Karlsoon E."/>
            <person name="Thesleff S."/>
        </authorList>
    </citation>
    <scope>FUNCTION</scope>
    <scope>SUBUNIT</scope>
    <scope>CARBOHYDRATE CONTENT</scope>
    <scope>TOXIC DOSE</scope>
    <source>
        <tissue>Venom</tissue>
    </source>
</reference>
<reference key="5">
    <citation type="journal article" date="1995" name="J. Neurochem.">
        <title>Novel reticular calcium binding protein is purified on taipoxin columns.</title>
        <authorList>
            <person name="Dodds D."/>
            <person name="Schlimgen A.K."/>
            <person name="Lu S.Y."/>
            <person name="Perin M.S."/>
        </authorList>
    </citation>
    <scope>FUNCTION AS RCN2 BINDING PROTEIN</scope>
</reference>
<reference key="6">
    <citation type="journal article" date="2000" name="J. Biol. Chem.">
        <title>Biochemical interactions of the neuronal pentraxins. Neuronal pentraxin (NP) receptor binds to taipoxin and taipoxin-associated calcium-binding protein 49 via NP1 and NP2.</title>
        <authorList>
            <person name="Kirkpatrick L.L."/>
            <person name="Matzuk M.M."/>
            <person name="Dodds D.C."/>
            <person name="Perin M.S."/>
        </authorList>
    </citation>
    <scope>FUNCTION AS PENTRAXIN BINDING PROTEIN</scope>
</reference>
<keyword id="KW-0903">Direct protein sequencing</keyword>
<keyword id="KW-1015">Disulfide bond</keyword>
<keyword id="KW-0325">Glycoprotein</keyword>
<keyword id="KW-0964">Secreted</keyword>
<keyword id="KW-0730">Sialic acid</keyword>
<keyword id="KW-0732">Signal</keyword>
<dbReference type="EMBL" id="AY691659">
    <property type="protein sequence ID" value="AAY47068.1"/>
    <property type="molecule type" value="mRNA"/>
</dbReference>
<dbReference type="PIR" id="A00756">
    <property type="entry name" value="PSOXG"/>
</dbReference>
<dbReference type="SMR" id="P00616"/>
<dbReference type="iPTMnet" id="P00616"/>
<dbReference type="GO" id="GO:0005576">
    <property type="term" value="C:extracellular region"/>
    <property type="evidence" value="ECO:0007669"/>
    <property type="project" value="UniProtKB-SubCell"/>
</dbReference>
<dbReference type="GO" id="GO:0005509">
    <property type="term" value="F:calcium ion binding"/>
    <property type="evidence" value="ECO:0007669"/>
    <property type="project" value="InterPro"/>
</dbReference>
<dbReference type="GO" id="GO:0047498">
    <property type="term" value="F:calcium-dependent phospholipase A2 activity"/>
    <property type="evidence" value="ECO:0007669"/>
    <property type="project" value="TreeGrafter"/>
</dbReference>
<dbReference type="GO" id="GO:0005543">
    <property type="term" value="F:phospholipid binding"/>
    <property type="evidence" value="ECO:0007669"/>
    <property type="project" value="TreeGrafter"/>
</dbReference>
<dbReference type="GO" id="GO:0005102">
    <property type="term" value="F:signaling receptor binding"/>
    <property type="evidence" value="ECO:0007669"/>
    <property type="project" value="TreeGrafter"/>
</dbReference>
<dbReference type="GO" id="GO:0050482">
    <property type="term" value="P:arachidonate secretion"/>
    <property type="evidence" value="ECO:0007669"/>
    <property type="project" value="InterPro"/>
</dbReference>
<dbReference type="GO" id="GO:0006633">
    <property type="term" value="P:fatty acid biosynthetic process"/>
    <property type="evidence" value="ECO:0007669"/>
    <property type="project" value="TreeGrafter"/>
</dbReference>
<dbReference type="GO" id="GO:0016042">
    <property type="term" value="P:lipid catabolic process"/>
    <property type="evidence" value="ECO:0007669"/>
    <property type="project" value="InterPro"/>
</dbReference>
<dbReference type="GO" id="GO:0006644">
    <property type="term" value="P:phospholipid metabolic process"/>
    <property type="evidence" value="ECO:0007669"/>
    <property type="project" value="InterPro"/>
</dbReference>
<dbReference type="GO" id="GO:0048146">
    <property type="term" value="P:positive regulation of fibroblast proliferation"/>
    <property type="evidence" value="ECO:0007669"/>
    <property type="project" value="TreeGrafter"/>
</dbReference>
<dbReference type="CDD" id="cd00125">
    <property type="entry name" value="PLA2c"/>
    <property type="match status" value="1"/>
</dbReference>
<dbReference type="FunFam" id="1.20.90.10:FF:000007">
    <property type="entry name" value="Acidic phospholipase A2"/>
    <property type="match status" value="1"/>
</dbReference>
<dbReference type="Gene3D" id="1.20.90.10">
    <property type="entry name" value="Phospholipase A2 domain"/>
    <property type="match status" value="1"/>
</dbReference>
<dbReference type="InterPro" id="IPR001211">
    <property type="entry name" value="PLipase_A2"/>
</dbReference>
<dbReference type="InterPro" id="IPR033112">
    <property type="entry name" value="PLipase_A2_Asp_AS"/>
</dbReference>
<dbReference type="InterPro" id="IPR016090">
    <property type="entry name" value="PLipase_A2_dom"/>
</dbReference>
<dbReference type="InterPro" id="IPR036444">
    <property type="entry name" value="PLipase_A2_dom_sf"/>
</dbReference>
<dbReference type="InterPro" id="IPR033113">
    <property type="entry name" value="PLipase_A2_His_AS"/>
</dbReference>
<dbReference type="PANTHER" id="PTHR11716:SF94">
    <property type="entry name" value="PHOSPHOLIPASE A2"/>
    <property type="match status" value="1"/>
</dbReference>
<dbReference type="PANTHER" id="PTHR11716">
    <property type="entry name" value="PHOSPHOLIPASE A2 FAMILY MEMBER"/>
    <property type="match status" value="1"/>
</dbReference>
<dbReference type="Pfam" id="PF00068">
    <property type="entry name" value="Phospholip_A2_1"/>
    <property type="match status" value="1"/>
</dbReference>
<dbReference type="PRINTS" id="PR00389">
    <property type="entry name" value="PHPHLIPASEA2"/>
</dbReference>
<dbReference type="SMART" id="SM00085">
    <property type="entry name" value="PA2c"/>
    <property type="match status" value="1"/>
</dbReference>
<dbReference type="SUPFAM" id="SSF48619">
    <property type="entry name" value="Phospholipase A2, PLA2"/>
    <property type="match status" value="1"/>
</dbReference>
<dbReference type="PROSITE" id="PS00119">
    <property type="entry name" value="PA2_ASP"/>
    <property type="match status" value="1"/>
</dbReference>
<dbReference type="PROSITE" id="PS00118">
    <property type="entry name" value="PA2_HIS"/>
    <property type="match status" value="1"/>
</dbReference>
<protein>
    <recommendedName>
        <fullName>Acidic phospholipase A2 homolog taipoxin gamma chain</fullName>
        <shortName>svPLA2 homolog</shortName>
    </recommendedName>
</protein>
<sequence length="152" mass="16558">MHPAHLLVLLAVCVSLLGSSEIPQPSLDFEQFSNMIQCTIPCGESCLAYMDYGCYCGPGGSGTPIDDLDRCCKTHDECYAEAGKLSACKSVLSEPNNDTYSYECNEGQLTCNDDNDECKAFICNCDRTAVTCFAGAPYNDLNYNIGMIEHCK</sequence>
<evidence type="ECO:0000250" key="1"/>
<evidence type="ECO:0000269" key="2">
    <source>
    </source>
</evidence>
<evidence type="ECO:0000269" key="3">
    <source>
    </source>
</evidence>
<evidence type="ECO:0000269" key="4">
    <source>
    </source>
</evidence>
<evidence type="ECO:0000269" key="5">
    <source>
    </source>
</evidence>
<evidence type="ECO:0000269" key="6">
    <source>
    </source>
</evidence>
<evidence type="ECO:0000305" key="7"/>
<accession>P00616</accession>
<accession>Q4VRI6</accession>
<name>PA2HG_OXYSC</name>